<gene>
    <name evidence="8" type="primary">bsc11</name>
    <name evidence="7" type="synonym">orf11</name>
</gene>
<protein>
    <recommendedName>
        <fullName evidence="7">Cytochrome P450 monooxygenase bsc11</fullName>
        <ecNumber evidence="10">1.-.-.-</ecNumber>
    </recommendedName>
    <alternativeName>
        <fullName evidence="7">Brassicicene C biosynthetic gene cluster protein 11</fullName>
    </alternativeName>
    <alternativeName>
        <fullName evidence="7">Cytochrome P450 monooxygenase</fullName>
    </alternativeName>
</protein>
<reference key="1">
    <citation type="journal article" date="2009" name="Bioorg. Med. Chem. Lett.">
        <title>Functional analyses of cytochrome P450 genes responsible for the early steps of brassicicene C biosynthesis.</title>
        <authorList>
            <person name="Hashimoto M."/>
            <person name="Higuchi Y."/>
            <person name="Takahashi S."/>
            <person name="Osada H."/>
            <person name="Sakaki T."/>
            <person name="Toyomasu T."/>
            <person name="Sassa T."/>
            <person name="Kato N."/>
            <person name="Dairi T."/>
        </authorList>
    </citation>
    <scope>NUCLEOTIDE SEQUENCE [MRNA]</scope>
    <scope>FUNCTION</scope>
    <scope>PATHWAY</scope>
    <source>
        <strain>ATCC 96836</strain>
    </source>
</reference>
<reference key="2">
    <citation type="journal article" date="2009" name="Bioorg. Med. Chem. Lett.">
        <title>Identification and functional analysis of brassicicene C biosynthetic gene cluster in Alternaria brassicicola.</title>
        <authorList>
            <person name="Minami A."/>
            <person name="Tajima N."/>
            <person name="Higuchi Y."/>
            <person name="Toyomasu T."/>
            <person name="Sassa T."/>
            <person name="Kato N."/>
            <person name="Dairi T."/>
        </authorList>
    </citation>
    <scope>FUNCTION</scope>
</reference>
<reference key="3">
    <citation type="journal article" date="2011" name="J. Am. Chem. Soc.">
        <title>Dioxygenases, key enzymes to determine the aglycon structures of fusicoccin and brassicicene, diterpene compounds produced by fungi.</title>
        <authorList>
            <person name="Ono Y."/>
            <person name="Minami A."/>
            <person name="Noike M."/>
            <person name="Higuchi Y."/>
            <person name="Toyomasu T."/>
            <person name="Sassa T."/>
            <person name="Kato N."/>
            <person name="Dairi T."/>
        </authorList>
    </citation>
    <scope>FUNCTION</scope>
</reference>
<comment type="function">
    <text evidence="4 5 6 9">Cytochrome P450 monooxygenase; part of the gene cluster that mediates the biosynthesis of the diterpene glucoside brassicicene C (PubMed:19097780). In the first step of the brassicicene C biosynthesis, the bifunctional diterpene synthase bsc8 that possesses both prenyl transferase and terpene cyclase activity, converts isopentenyl diphosphate and dimethylallyl diphosphate into geranylgeranyl diphosphate (GGDP) that is further converted into fusicocca-2,10(14)-diene, the first precursor for brassicicene C (PubMed:19097780). Fusicocca-2,10(14)-diene is then substrate of cytochrome P450 monooxygenase bsc1 for hydroxylation at the C-8 position (PubMed:19700326). Oxidation at C-16 position to aldehyde is then catalyzed by the cytochrome P450 monooyxygenase bsc7, yielding fusicocca-2,10(14)-diene-8-beta,16-diol (PubMed:19700326). Follows the isomerization of the double bond and reduction of aldehyde to alcohol catalyzed by the short-chain dehydrogenase/reductase bsc3 to yield the diol compound fusicocca-1,10(14)-diene-8 beta,16-diol (Probable). The next step is the oxidation at the C-3 position of fusicocca-2,10(14)-diene-8-beta,16-diol catalyzed by the alpha-ketoglutarate dependent dioxygenase bsc9, to produce a triol compound (PubMed:21299202). Methylation of the hydroxy group at position 16 is performed by the methyltransferase bsc6 (PubMed:19097780). 16-O-methylation is followed by oxidation at the C-13 position to ketone and an alkyl shift of the methyl group leads to brassicicene C (Probable). Although the probable acetyltransferase bsc4 is included in the gene cluster, no acetylation reactions are necessary for brassicicene C biosynthesis. However, the fact that brassicicene E, which is a structurally related compound having an acetoxy group at position 12, was previously isolated from another strain of A.brassicicola suggests that the ATCC 96836 strain might also produce a small amount of brassicicene E (Probable).</text>
</comment>
<comment type="cofactor">
    <cofactor evidence="1">
        <name>heme</name>
        <dbReference type="ChEBI" id="CHEBI:30413"/>
    </cofactor>
</comment>
<comment type="pathway">
    <text evidence="10">Mycotoxin biosynthesis.</text>
</comment>
<comment type="subcellular location">
    <subcellularLocation>
        <location evidence="2">Membrane</location>
        <topology evidence="2">Single-pass membrane protein</topology>
    </subcellularLocation>
</comment>
<comment type="similarity">
    <text evidence="8">Belongs to the cytochrome P450 family.</text>
</comment>
<proteinExistence type="evidence at transcript level"/>
<keyword id="KW-0325">Glycoprotein</keyword>
<keyword id="KW-0349">Heme</keyword>
<keyword id="KW-0408">Iron</keyword>
<keyword id="KW-0472">Membrane</keyword>
<keyword id="KW-0479">Metal-binding</keyword>
<keyword id="KW-0503">Monooxygenase</keyword>
<keyword id="KW-0560">Oxidoreductase</keyword>
<keyword id="KW-0812">Transmembrane</keyword>
<keyword id="KW-1133">Transmembrane helix</keyword>
<accession>D1MX89</accession>
<dbReference type="EC" id="1.-.-.-" evidence="10"/>
<dbReference type="EMBL" id="AB506082">
    <property type="protein sequence ID" value="BAI52804.1"/>
    <property type="molecule type" value="mRNA"/>
</dbReference>
<dbReference type="SMR" id="D1MX89"/>
<dbReference type="GlyCosmos" id="D1MX89">
    <property type="glycosylation" value="1 site, No reported glycans"/>
</dbReference>
<dbReference type="GO" id="GO:0016020">
    <property type="term" value="C:membrane"/>
    <property type="evidence" value="ECO:0007669"/>
    <property type="project" value="UniProtKB-SubCell"/>
</dbReference>
<dbReference type="GO" id="GO:0020037">
    <property type="term" value="F:heme binding"/>
    <property type="evidence" value="ECO:0007669"/>
    <property type="project" value="InterPro"/>
</dbReference>
<dbReference type="GO" id="GO:0005506">
    <property type="term" value="F:iron ion binding"/>
    <property type="evidence" value="ECO:0007669"/>
    <property type="project" value="InterPro"/>
</dbReference>
<dbReference type="GO" id="GO:0004497">
    <property type="term" value="F:monooxygenase activity"/>
    <property type="evidence" value="ECO:0007669"/>
    <property type="project" value="UniProtKB-KW"/>
</dbReference>
<dbReference type="GO" id="GO:0016705">
    <property type="term" value="F:oxidoreductase activity, acting on paired donors, with incorporation or reduction of molecular oxygen"/>
    <property type="evidence" value="ECO:0007669"/>
    <property type="project" value="InterPro"/>
</dbReference>
<dbReference type="GO" id="GO:0019748">
    <property type="term" value="P:secondary metabolic process"/>
    <property type="evidence" value="ECO:0007669"/>
    <property type="project" value="UniProtKB-ARBA"/>
</dbReference>
<dbReference type="CDD" id="cd11041">
    <property type="entry name" value="CYP503A1-like"/>
    <property type="match status" value="1"/>
</dbReference>
<dbReference type="Gene3D" id="1.10.630.10">
    <property type="entry name" value="Cytochrome P450"/>
    <property type="match status" value="1"/>
</dbReference>
<dbReference type="InterPro" id="IPR001128">
    <property type="entry name" value="Cyt_P450"/>
</dbReference>
<dbReference type="InterPro" id="IPR017972">
    <property type="entry name" value="Cyt_P450_CS"/>
</dbReference>
<dbReference type="InterPro" id="IPR002403">
    <property type="entry name" value="Cyt_P450_E_grp-IV"/>
</dbReference>
<dbReference type="InterPro" id="IPR036396">
    <property type="entry name" value="Cyt_P450_sf"/>
</dbReference>
<dbReference type="PANTHER" id="PTHR46206">
    <property type="entry name" value="CYTOCHROME P450"/>
    <property type="match status" value="1"/>
</dbReference>
<dbReference type="PANTHER" id="PTHR46206:SF2">
    <property type="entry name" value="CYTOCHROME P450 MONOOXYGENASE AUSG-RELATED"/>
    <property type="match status" value="1"/>
</dbReference>
<dbReference type="Pfam" id="PF00067">
    <property type="entry name" value="p450"/>
    <property type="match status" value="1"/>
</dbReference>
<dbReference type="PRINTS" id="PR00465">
    <property type="entry name" value="EP450IV"/>
</dbReference>
<dbReference type="SUPFAM" id="SSF48264">
    <property type="entry name" value="Cytochrome P450"/>
    <property type="match status" value="1"/>
</dbReference>
<dbReference type="PROSITE" id="PS00086">
    <property type="entry name" value="CYTOCHROME_P450"/>
    <property type="match status" value="1"/>
</dbReference>
<sequence length="517" mass="59771">MIFLAPFEFLDPLRHALPLTCTGLIIIFAFYLSRHHSPKPAPNIPIHSYDREEYFRRGYELVQEGQKKHPSCFQLRTATGWKILVPIRFVEELRKNPSLSFARGNDKDAFIEYPGFEAMEAACHDDYFMQEVVRVKLTQTLNLLYSSVIDESAVAMSEVLGEDKIWRTLRIKDDINHIVARVTSRVFLGFPLCRNQKWLDIVVNHTKAVFMAQKRMRQTPPALRPLIHYFLPETKLLRQHLHAARTLISPELAKRRAAVEEALRHGKIPKESANAISWMVEVSQAQGRKIDVAVHVVSLSMTAIQTTSEVMTNCILQLCETPSIVDDLRAEIIFLLKEGGWTKYTLYKMRLLDSFIREVMRHHDFLRVTSWRGCTEDVVLSDGTVLPKGSCIYFDDSKVVDPEHYPDPEKFDPMRSFKKREQPGQEDRHQFVSLQTDHMAFGYGIHACPGRFFANMELKVMLCNFLLKYDVRLVPGEKRPVDILFEVQRMVPPDVRVQIKVRDQEPEVDLYSPISST</sequence>
<name>BSC11_ALTBR</name>
<evidence type="ECO:0000250" key="1">
    <source>
        <dbReference type="UniProtKB" id="P04798"/>
    </source>
</evidence>
<evidence type="ECO:0000255" key="2"/>
<evidence type="ECO:0000255" key="3">
    <source>
        <dbReference type="PROSITE-ProRule" id="PRU00498"/>
    </source>
</evidence>
<evidence type="ECO:0000269" key="4">
    <source>
    </source>
</evidence>
<evidence type="ECO:0000269" key="5">
    <source>
    </source>
</evidence>
<evidence type="ECO:0000269" key="6">
    <source>
    </source>
</evidence>
<evidence type="ECO:0000303" key="7">
    <source>
    </source>
</evidence>
<evidence type="ECO:0000305" key="8"/>
<evidence type="ECO:0000305" key="9">
    <source>
    </source>
</evidence>
<evidence type="ECO:0000305" key="10">
    <source>
    </source>
</evidence>
<feature type="chain" id="PRO_0000445455" description="Cytochrome P450 monooxygenase bsc11">
    <location>
        <begin position="1"/>
        <end position="517"/>
    </location>
</feature>
<feature type="transmembrane region" description="Helical" evidence="2">
    <location>
        <begin position="16"/>
        <end position="33"/>
    </location>
</feature>
<feature type="binding site" description="axial binding residue" evidence="1">
    <location>
        <position position="448"/>
    </location>
    <ligand>
        <name>heme</name>
        <dbReference type="ChEBI" id="CHEBI:30413"/>
    </ligand>
    <ligandPart>
        <name>Fe</name>
        <dbReference type="ChEBI" id="CHEBI:18248"/>
    </ligandPart>
</feature>
<feature type="glycosylation site" description="N-linked (GlcNAc...) asparagine" evidence="3">
    <location>
        <position position="204"/>
    </location>
</feature>
<organism>
    <name type="scientific">Alternaria brassicicola</name>
    <name type="common">Dark leaf spot agent</name>
    <dbReference type="NCBI Taxonomy" id="29001"/>
    <lineage>
        <taxon>Eukaryota</taxon>
        <taxon>Fungi</taxon>
        <taxon>Dikarya</taxon>
        <taxon>Ascomycota</taxon>
        <taxon>Pezizomycotina</taxon>
        <taxon>Dothideomycetes</taxon>
        <taxon>Pleosporomycetidae</taxon>
        <taxon>Pleosporales</taxon>
        <taxon>Pleosporineae</taxon>
        <taxon>Pleosporaceae</taxon>
        <taxon>Alternaria</taxon>
        <taxon>Alternaria sect. Brassicicola</taxon>
    </lineage>
</organism>